<sequence>MITGRTALYGVVGHPVAHSRSPEMQNAAFAKLGVDAAYVALPVAPERIDEALRGAHALGFQGLNVTVPHKPRAASLCHALDPVATAVGAANTLRRTRDGWEGFNTDAPACRTLLEAAGVARGARALLVGAGGAARAAAWALLQLGTELRVAARREEAAAELCRDLAAAVPGADAATADFEDLEAEADAAAVVVNGTSVELPGHEGRLPPLRFRADQVVLDFVYGDTELARAARAGGARLVTGEQVLVRQGALAFTIWTGLPAPEADMARALEAREGAR</sequence>
<organism>
    <name type="scientific">Anaeromyxobacter dehalogenans (strain 2CP-C)</name>
    <dbReference type="NCBI Taxonomy" id="290397"/>
    <lineage>
        <taxon>Bacteria</taxon>
        <taxon>Pseudomonadati</taxon>
        <taxon>Myxococcota</taxon>
        <taxon>Myxococcia</taxon>
        <taxon>Myxococcales</taxon>
        <taxon>Cystobacterineae</taxon>
        <taxon>Anaeromyxobacteraceae</taxon>
        <taxon>Anaeromyxobacter</taxon>
    </lineage>
</organism>
<reference key="1">
    <citation type="submission" date="2006-01" db="EMBL/GenBank/DDBJ databases">
        <title>Complete sequence of Anaeromyxobacter dehalogenans 2CP-C.</title>
        <authorList>
            <person name="Copeland A."/>
            <person name="Lucas S."/>
            <person name="Lapidus A."/>
            <person name="Barry K."/>
            <person name="Detter J.C."/>
            <person name="Glavina T."/>
            <person name="Hammon N."/>
            <person name="Israni S."/>
            <person name="Pitluck S."/>
            <person name="Brettin T."/>
            <person name="Bruce D."/>
            <person name="Han C."/>
            <person name="Tapia R."/>
            <person name="Gilna P."/>
            <person name="Kiss H."/>
            <person name="Schmutz J."/>
            <person name="Larimer F."/>
            <person name="Land M."/>
            <person name="Kyrpides N."/>
            <person name="Anderson I."/>
            <person name="Sanford R.A."/>
            <person name="Ritalahti K.M."/>
            <person name="Thomas H.S."/>
            <person name="Kirby J.R."/>
            <person name="Zhulin I.B."/>
            <person name="Loeffler F.E."/>
            <person name="Richardson P."/>
        </authorList>
    </citation>
    <scope>NUCLEOTIDE SEQUENCE [LARGE SCALE GENOMIC DNA]</scope>
    <source>
        <strain>2CP-C</strain>
    </source>
</reference>
<feature type="chain" id="PRO_0000325098" description="Shikimate dehydrogenase (NADP(+))">
    <location>
        <begin position="1"/>
        <end position="278"/>
    </location>
</feature>
<feature type="active site" description="Proton acceptor" evidence="1">
    <location>
        <position position="70"/>
    </location>
</feature>
<feature type="binding site" evidence="1">
    <location>
        <begin position="19"/>
        <end position="21"/>
    </location>
    <ligand>
        <name>shikimate</name>
        <dbReference type="ChEBI" id="CHEBI:36208"/>
    </ligand>
</feature>
<feature type="binding site" evidence="1">
    <location>
        <position position="66"/>
    </location>
    <ligand>
        <name>shikimate</name>
        <dbReference type="ChEBI" id="CHEBI:36208"/>
    </ligand>
</feature>
<feature type="binding site" evidence="1">
    <location>
        <position position="91"/>
    </location>
    <ligand>
        <name>shikimate</name>
        <dbReference type="ChEBI" id="CHEBI:36208"/>
    </ligand>
</feature>
<feature type="binding site" evidence="1">
    <location>
        <position position="106"/>
    </location>
    <ligand>
        <name>shikimate</name>
        <dbReference type="ChEBI" id="CHEBI:36208"/>
    </ligand>
</feature>
<feature type="binding site" evidence="1">
    <location>
        <begin position="129"/>
        <end position="133"/>
    </location>
    <ligand>
        <name>NADP(+)</name>
        <dbReference type="ChEBI" id="CHEBI:58349"/>
    </ligand>
</feature>
<feature type="binding site" evidence="1">
    <location>
        <position position="221"/>
    </location>
    <ligand>
        <name>NADP(+)</name>
        <dbReference type="ChEBI" id="CHEBI:58349"/>
    </ligand>
</feature>
<feature type="binding site" evidence="1">
    <location>
        <position position="223"/>
    </location>
    <ligand>
        <name>shikimate</name>
        <dbReference type="ChEBI" id="CHEBI:36208"/>
    </ligand>
</feature>
<feature type="binding site" evidence="1">
    <location>
        <position position="242"/>
    </location>
    <ligand>
        <name>NADP(+)</name>
        <dbReference type="ChEBI" id="CHEBI:58349"/>
    </ligand>
</feature>
<name>AROE_ANADE</name>
<evidence type="ECO:0000255" key="1">
    <source>
        <dbReference type="HAMAP-Rule" id="MF_00222"/>
    </source>
</evidence>
<comment type="function">
    <text evidence="1">Involved in the biosynthesis of the chorismate, which leads to the biosynthesis of aromatic amino acids. Catalyzes the reversible NADPH linked reduction of 3-dehydroshikimate (DHSA) to yield shikimate (SA).</text>
</comment>
<comment type="catalytic activity">
    <reaction evidence="1">
        <text>shikimate + NADP(+) = 3-dehydroshikimate + NADPH + H(+)</text>
        <dbReference type="Rhea" id="RHEA:17737"/>
        <dbReference type="ChEBI" id="CHEBI:15378"/>
        <dbReference type="ChEBI" id="CHEBI:16630"/>
        <dbReference type="ChEBI" id="CHEBI:36208"/>
        <dbReference type="ChEBI" id="CHEBI:57783"/>
        <dbReference type="ChEBI" id="CHEBI:58349"/>
        <dbReference type="EC" id="1.1.1.25"/>
    </reaction>
</comment>
<comment type="pathway">
    <text evidence="1">Metabolic intermediate biosynthesis; chorismate biosynthesis; chorismate from D-erythrose 4-phosphate and phosphoenolpyruvate: step 4/7.</text>
</comment>
<comment type="subunit">
    <text evidence="1">Homodimer.</text>
</comment>
<comment type="similarity">
    <text evidence="1">Belongs to the shikimate dehydrogenase family.</text>
</comment>
<gene>
    <name evidence="1" type="primary">aroE</name>
    <name type="ordered locus">Adeh_0185</name>
</gene>
<accession>Q2IMC7</accession>
<protein>
    <recommendedName>
        <fullName evidence="1">Shikimate dehydrogenase (NADP(+))</fullName>
        <shortName evidence="1">SDH</shortName>
        <ecNumber evidence="1">1.1.1.25</ecNumber>
    </recommendedName>
</protein>
<keyword id="KW-0028">Amino-acid biosynthesis</keyword>
<keyword id="KW-0057">Aromatic amino acid biosynthesis</keyword>
<keyword id="KW-0521">NADP</keyword>
<keyword id="KW-0560">Oxidoreductase</keyword>
<keyword id="KW-1185">Reference proteome</keyword>
<proteinExistence type="inferred from homology"/>
<dbReference type="EC" id="1.1.1.25" evidence="1"/>
<dbReference type="EMBL" id="CP000251">
    <property type="protein sequence ID" value="ABC79962.1"/>
    <property type="molecule type" value="Genomic_DNA"/>
</dbReference>
<dbReference type="RefSeq" id="WP_011419245.1">
    <property type="nucleotide sequence ID" value="NC_007760.1"/>
</dbReference>
<dbReference type="SMR" id="Q2IMC7"/>
<dbReference type="STRING" id="290397.Adeh_0185"/>
<dbReference type="KEGG" id="ade:Adeh_0185"/>
<dbReference type="eggNOG" id="COG0169">
    <property type="taxonomic scope" value="Bacteria"/>
</dbReference>
<dbReference type="HOGENOM" id="CLU_044063_4_1_7"/>
<dbReference type="OrthoDB" id="9792692at2"/>
<dbReference type="UniPathway" id="UPA00053">
    <property type="reaction ID" value="UER00087"/>
</dbReference>
<dbReference type="Proteomes" id="UP000001935">
    <property type="component" value="Chromosome"/>
</dbReference>
<dbReference type="GO" id="GO:0004764">
    <property type="term" value="F:shikimate 3-dehydrogenase (NADP+) activity"/>
    <property type="evidence" value="ECO:0007669"/>
    <property type="project" value="UniProtKB-UniRule"/>
</dbReference>
<dbReference type="GO" id="GO:0008652">
    <property type="term" value="P:amino acid biosynthetic process"/>
    <property type="evidence" value="ECO:0007669"/>
    <property type="project" value="UniProtKB-KW"/>
</dbReference>
<dbReference type="GO" id="GO:0009073">
    <property type="term" value="P:aromatic amino acid family biosynthetic process"/>
    <property type="evidence" value="ECO:0007669"/>
    <property type="project" value="UniProtKB-KW"/>
</dbReference>
<dbReference type="GO" id="GO:0009423">
    <property type="term" value="P:chorismate biosynthetic process"/>
    <property type="evidence" value="ECO:0007669"/>
    <property type="project" value="UniProtKB-UniRule"/>
</dbReference>
<dbReference type="GO" id="GO:0019632">
    <property type="term" value="P:shikimate metabolic process"/>
    <property type="evidence" value="ECO:0007669"/>
    <property type="project" value="TreeGrafter"/>
</dbReference>
<dbReference type="Gene3D" id="3.40.50.10860">
    <property type="entry name" value="Leucine Dehydrogenase, chain A, domain 1"/>
    <property type="match status" value="1"/>
</dbReference>
<dbReference type="Gene3D" id="3.40.50.720">
    <property type="entry name" value="NAD(P)-binding Rossmann-like Domain"/>
    <property type="match status" value="1"/>
</dbReference>
<dbReference type="HAMAP" id="MF_00222">
    <property type="entry name" value="Shikimate_DH_AroE"/>
    <property type="match status" value="1"/>
</dbReference>
<dbReference type="InterPro" id="IPR046346">
    <property type="entry name" value="Aminoacid_DH-like_N_sf"/>
</dbReference>
<dbReference type="InterPro" id="IPR036291">
    <property type="entry name" value="NAD(P)-bd_dom_sf"/>
</dbReference>
<dbReference type="InterPro" id="IPR041121">
    <property type="entry name" value="SDH_C"/>
</dbReference>
<dbReference type="InterPro" id="IPR013708">
    <property type="entry name" value="Shikimate_DH-bd_N"/>
</dbReference>
<dbReference type="InterPro" id="IPR022893">
    <property type="entry name" value="Shikimate_DH_fam"/>
</dbReference>
<dbReference type="PANTHER" id="PTHR21089:SF1">
    <property type="entry name" value="BIFUNCTIONAL 3-DEHYDROQUINATE DEHYDRATASE_SHIKIMATE DEHYDROGENASE, CHLOROPLASTIC"/>
    <property type="match status" value="1"/>
</dbReference>
<dbReference type="PANTHER" id="PTHR21089">
    <property type="entry name" value="SHIKIMATE DEHYDROGENASE"/>
    <property type="match status" value="1"/>
</dbReference>
<dbReference type="Pfam" id="PF18317">
    <property type="entry name" value="SDH_C"/>
    <property type="match status" value="1"/>
</dbReference>
<dbReference type="Pfam" id="PF08501">
    <property type="entry name" value="Shikimate_dh_N"/>
    <property type="match status" value="1"/>
</dbReference>
<dbReference type="SUPFAM" id="SSF53223">
    <property type="entry name" value="Aminoacid dehydrogenase-like, N-terminal domain"/>
    <property type="match status" value="1"/>
</dbReference>
<dbReference type="SUPFAM" id="SSF51735">
    <property type="entry name" value="NAD(P)-binding Rossmann-fold domains"/>
    <property type="match status" value="1"/>
</dbReference>